<dbReference type="EC" id="2.3.1.180" evidence="1"/>
<dbReference type="EMBL" id="CP001010">
    <property type="protein sequence ID" value="ACB43683.1"/>
    <property type="molecule type" value="Genomic_DNA"/>
</dbReference>
<dbReference type="SMR" id="B1XTK6"/>
<dbReference type="STRING" id="452638.Pnec_0405"/>
<dbReference type="KEGG" id="pne:Pnec_0405"/>
<dbReference type="eggNOG" id="COG0332">
    <property type="taxonomic scope" value="Bacteria"/>
</dbReference>
<dbReference type="HOGENOM" id="CLU_039592_3_1_4"/>
<dbReference type="OrthoDB" id="9815506at2"/>
<dbReference type="UniPathway" id="UPA00094"/>
<dbReference type="GO" id="GO:0005737">
    <property type="term" value="C:cytoplasm"/>
    <property type="evidence" value="ECO:0007669"/>
    <property type="project" value="UniProtKB-SubCell"/>
</dbReference>
<dbReference type="GO" id="GO:0004315">
    <property type="term" value="F:3-oxoacyl-[acyl-carrier-protein] synthase activity"/>
    <property type="evidence" value="ECO:0007669"/>
    <property type="project" value="InterPro"/>
</dbReference>
<dbReference type="GO" id="GO:0033818">
    <property type="term" value="F:beta-ketoacyl-acyl-carrier-protein synthase III activity"/>
    <property type="evidence" value="ECO:0007669"/>
    <property type="project" value="UniProtKB-UniRule"/>
</dbReference>
<dbReference type="GO" id="GO:0006633">
    <property type="term" value="P:fatty acid biosynthetic process"/>
    <property type="evidence" value="ECO:0007669"/>
    <property type="project" value="UniProtKB-UniRule"/>
</dbReference>
<dbReference type="GO" id="GO:0044550">
    <property type="term" value="P:secondary metabolite biosynthetic process"/>
    <property type="evidence" value="ECO:0007669"/>
    <property type="project" value="TreeGrafter"/>
</dbReference>
<dbReference type="CDD" id="cd00830">
    <property type="entry name" value="KAS_III"/>
    <property type="match status" value="1"/>
</dbReference>
<dbReference type="FunFam" id="3.40.47.10:FF:000004">
    <property type="entry name" value="3-oxoacyl-[acyl-carrier-protein] synthase 3"/>
    <property type="match status" value="1"/>
</dbReference>
<dbReference type="Gene3D" id="3.40.47.10">
    <property type="match status" value="1"/>
</dbReference>
<dbReference type="HAMAP" id="MF_01815">
    <property type="entry name" value="FabH"/>
    <property type="match status" value="1"/>
</dbReference>
<dbReference type="InterPro" id="IPR013747">
    <property type="entry name" value="ACP_syn_III_C"/>
</dbReference>
<dbReference type="InterPro" id="IPR013751">
    <property type="entry name" value="ACP_syn_III_N"/>
</dbReference>
<dbReference type="InterPro" id="IPR004655">
    <property type="entry name" value="FabH"/>
</dbReference>
<dbReference type="InterPro" id="IPR016039">
    <property type="entry name" value="Thiolase-like"/>
</dbReference>
<dbReference type="NCBIfam" id="TIGR00747">
    <property type="entry name" value="fabH"/>
    <property type="match status" value="1"/>
</dbReference>
<dbReference type="NCBIfam" id="NF006829">
    <property type="entry name" value="PRK09352.1"/>
    <property type="match status" value="1"/>
</dbReference>
<dbReference type="PANTHER" id="PTHR34069">
    <property type="entry name" value="3-OXOACYL-[ACYL-CARRIER-PROTEIN] SYNTHASE 3"/>
    <property type="match status" value="1"/>
</dbReference>
<dbReference type="PANTHER" id="PTHR34069:SF2">
    <property type="entry name" value="BETA-KETOACYL-[ACYL-CARRIER-PROTEIN] SYNTHASE III"/>
    <property type="match status" value="1"/>
</dbReference>
<dbReference type="Pfam" id="PF08545">
    <property type="entry name" value="ACP_syn_III"/>
    <property type="match status" value="1"/>
</dbReference>
<dbReference type="Pfam" id="PF08541">
    <property type="entry name" value="ACP_syn_III_C"/>
    <property type="match status" value="1"/>
</dbReference>
<dbReference type="SUPFAM" id="SSF53901">
    <property type="entry name" value="Thiolase-like"/>
    <property type="match status" value="1"/>
</dbReference>
<organism>
    <name type="scientific">Polynucleobacter necessarius subsp. necessarius (strain STIR1)</name>
    <dbReference type="NCBI Taxonomy" id="452638"/>
    <lineage>
        <taxon>Bacteria</taxon>
        <taxon>Pseudomonadati</taxon>
        <taxon>Pseudomonadota</taxon>
        <taxon>Betaproteobacteria</taxon>
        <taxon>Burkholderiales</taxon>
        <taxon>Burkholderiaceae</taxon>
        <taxon>Polynucleobacter</taxon>
    </lineage>
</organism>
<comment type="function">
    <text evidence="1">Catalyzes the condensation reaction of fatty acid synthesis by the addition to an acyl acceptor of two carbons from malonyl-ACP. Catalyzes the first condensation reaction which initiates fatty acid synthesis and may therefore play a role in governing the total rate of fatty acid production. Possesses both acetoacetyl-ACP synthase and acetyl transacylase activities. Its substrate specificity determines the biosynthesis of branched-chain and/or straight-chain of fatty acids.</text>
</comment>
<comment type="catalytic activity">
    <reaction evidence="1">
        <text>malonyl-[ACP] + acetyl-CoA + H(+) = 3-oxobutanoyl-[ACP] + CO2 + CoA</text>
        <dbReference type="Rhea" id="RHEA:12080"/>
        <dbReference type="Rhea" id="RHEA-COMP:9623"/>
        <dbReference type="Rhea" id="RHEA-COMP:9625"/>
        <dbReference type="ChEBI" id="CHEBI:15378"/>
        <dbReference type="ChEBI" id="CHEBI:16526"/>
        <dbReference type="ChEBI" id="CHEBI:57287"/>
        <dbReference type="ChEBI" id="CHEBI:57288"/>
        <dbReference type="ChEBI" id="CHEBI:78449"/>
        <dbReference type="ChEBI" id="CHEBI:78450"/>
        <dbReference type="EC" id="2.3.1.180"/>
    </reaction>
</comment>
<comment type="pathway">
    <text evidence="1">Lipid metabolism; fatty acid biosynthesis.</text>
</comment>
<comment type="subunit">
    <text evidence="1">Homodimer.</text>
</comment>
<comment type="subcellular location">
    <subcellularLocation>
        <location evidence="1">Cytoplasm</location>
    </subcellularLocation>
</comment>
<comment type="domain">
    <text evidence="1">The last Arg residue of the ACP-binding site is essential for the weak association between ACP/AcpP and FabH.</text>
</comment>
<comment type="similarity">
    <text evidence="1">Belongs to the thiolase-like superfamily. FabH family.</text>
</comment>
<keyword id="KW-0012">Acyltransferase</keyword>
<keyword id="KW-0963">Cytoplasm</keyword>
<keyword id="KW-0275">Fatty acid biosynthesis</keyword>
<keyword id="KW-0276">Fatty acid metabolism</keyword>
<keyword id="KW-0444">Lipid biosynthesis</keyword>
<keyword id="KW-0443">Lipid metabolism</keyword>
<keyword id="KW-0511">Multifunctional enzyme</keyword>
<keyword id="KW-0808">Transferase</keyword>
<evidence type="ECO:0000255" key="1">
    <source>
        <dbReference type="HAMAP-Rule" id="MF_01815"/>
    </source>
</evidence>
<accession>B1XTK6</accession>
<gene>
    <name evidence="1" type="primary">fabH</name>
    <name type="ordered locus">Pnec_0405</name>
</gene>
<protein>
    <recommendedName>
        <fullName evidence="1">Beta-ketoacyl-[acyl-carrier-protein] synthase III</fullName>
        <shortName evidence="1">Beta-ketoacyl-ACP synthase III</shortName>
        <shortName evidence="1">KAS III</shortName>
        <ecNumber evidence="1">2.3.1.180</ecNumber>
    </recommendedName>
    <alternativeName>
        <fullName evidence="1">3-oxoacyl-[acyl-carrier-protein] synthase 3</fullName>
    </alternativeName>
    <alternativeName>
        <fullName evidence="1">3-oxoacyl-[acyl-carrier-protein] synthase III</fullName>
    </alternativeName>
</protein>
<sequence length="328" mass="34612">MSIFARVAGTGSYLPELRLTNQDLVERLAKTGLETSDEWIKTRSGISARHFAAENELTSDLAVRAAEAALSSTGINSADLDLIILATSTPDHLGGFPSTACVVQDKLGAHTSCAAFDVQAVCAGFTYALAVADAFIRSGSYKKVLVIGAETFSRILNFQDRGTCVLFGDGAGAVVLEASKEAGILSTVMHADGSQRDILCVPGRAGNGEVRGSPFMTMDGQAVFKLAVKVLEQVAHEALDKAKLKPEQIDWLVPHQANIRIMEGTAKKMGMSMDKVIVTVHEHGNTSAASIPLALDSGVRSGQIKRGQHLLLEGVGGGFAWGAVAIKY</sequence>
<proteinExistence type="inferred from homology"/>
<name>FABH_POLNS</name>
<reference key="1">
    <citation type="journal article" date="2013" name="Proc. Natl. Acad. Sci. U.S.A.">
        <title>Polynucleobacter necessarius, a model for genome reduction in both free-living and symbiotic bacteria.</title>
        <authorList>
            <person name="Boscaro V."/>
            <person name="Felletti M."/>
            <person name="Vannini C."/>
            <person name="Ackerman M.S."/>
            <person name="Chain P.S."/>
            <person name="Malfatti S."/>
            <person name="Vergez L.M."/>
            <person name="Shin M."/>
            <person name="Doak T.G."/>
            <person name="Lynch M."/>
            <person name="Petroni G."/>
        </authorList>
    </citation>
    <scope>NUCLEOTIDE SEQUENCE [LARGE SCALE GENOMIC DNA]</scope>
    <source>
        <strain>STIR1</strain>
    </source>
</reference>
<feature type="chain" id="PRO_1000187887" description="Beta-ketoacyl-[acyl-carrier-protein] synthase III">
    <location>
        <begin position="1"/>
        <end position="328"/>
    </location>
</feature>
<feature type="region of interest" description="ACP-binding" evidence="1">
    <location>
        <begin position="256"/>
        <end position="260"/>
    </location>
</feature>
<feature type="active site" evidence="1">
    <location>
        <position position="122"/>
    </location>
</feature>
<feature type="active site" evidence="1">
    <location>
        <position position="255"/>
    </location>
</feature>
<feature type="active site" evidence="1">
    <location>
        <position position="285"/>
    </location>
</feature>